<keyword id="KW-0238">DNA-binding</keyword>
<keyword id="KW-0539">Nucleus</keyword>
<keyword id="KW-1185">Reference proteome</keyword>
<keyword id="KW-0804">Transcription</keyword>
<keyword id="KW-0805">Transcription regulation</keyword>
<feature type="chain" id="PRO_0000306816" description="Putative transcription factor kapC">
    <location>
        <begin position="1"/>
        <end position="283"/>
    </location>
</feature>
<feature type="domain" description="bZIP">
    <location>
        <begin position="102"/>
        <end position="165"/>
    </location>
</feature>
<feature type="region of interest" description="Disordered" evidence="2">
    <location>
        <begin position="1"/>
        <end position="121"/>
    </location>
</feature>
<feature type="region of interest" description="Basic motif" evidence="1">
    <location>
        <begin position="103"/>
        <end position="126"/>
    </location>
</feature>
<feature type="region of interest" description="Leucine-zipper" evidence="1">
    <location>
        <begin position="130"/>
        <end position="161"/>
    </location>
</feature>
<feature type="region of interest" description="Disordered" evidence="2">
    <location>
        <begin position="178"/>
        <end position="283"/>
    </location>
</feature>
<feature type="compositionally biased region" description="Pro residues" evidence="2">
    <location>
        <begin position="1"/>
        <end position="10"/>
    </location>
</feature>
<feature type="compositionally biased region" description="Low complexity" evidence="2">
    <location>
        <begin position="26"/>
        <end position="42"/>
    </location>
</feature>
<feature type="compositionally biased region" description="Polar residues" evidence="2">
    <location>
        <begin position="55"/>
        <end position="67"/>
    </location>
</feature>
<feature type="compositionally biased region" description="Low complexity" evidence="2">
    <location>
        <begin position="108"/>
        <end position="118"/>
    </location>
</feature>
<comment type="function">
    <text evidence="1">Putative transcription factor.</text>
</comment>
<comment type="subcellular location">
    <subcellularLocation>
        <location evidence="1">Nucleus</location>
    </subcellularLocation>
</comment>
<comment type="similarity">
    <text evidence="3">Belongs to the bZIP family.</text>
</comment>
<comment type="sequence caution" evidence="3">
    <conflict type="erroneous gene model prediction">
        <sequence resource="EMBL-CDS" id="CAK46538"/>
    </conflict>
</comment>
<reference key="1">
    <citation type="journal article" date="2007" name="Nat. Biotechnol.">
        <title>Genome sequencing and analysis of the versatile cell factory Aspergillus niger CBS 513.88.</title>
        <authorList>
            <person name="Pel H.J."/>
            <person name="de Winde J.H."/>
            <person name="Archer D.B."/>
            <person name="Dyer P.S."/>
            <person name="Hofmann G."/>
            <person name="Schaap P.J."/>
            <person name="Turner G."/>
            <person name="de Vries R.P."/>
            <person name="Albang R."/>
            <person name="Albermann K."/>
            <person name="Andersen M.R."/>
            <person name="Bendtsen J.D."/>
            <person name="Benen J.A.E."/>
            <person name="van den Berg M."/>
            <person name="Breestraat S."/>
            <person name="Caddick M.X."/>
            <person name="Contreras R."/>
            <person name="Cornell M."/>
            <person name="Coutinho P.M."/>
            <person name="Danchin E.G.J."/>
            <person name="Debets A.J.M."/>
            <person name="Dekker P."/>
            <person name="van Dijck P.W.M."/>
            <person name="van Dijk A."/>
            <person name="Dijkhuizen L."/>
            <person name="Driessen A.J.M."/>
            <person name="d'Enfert C."/>
            <person name="Geysens S."/>
            <person name="Goosen C."/>
            <person name="Groot G.S.P."/>
            <person name="de Groot P.W.J."/>
            <person name="Guillemette T."/>
            <person name="Henrissat B."/>
            <person name="Herweijer M."/>
            <person name="van den Hombergh J.P.T.W."/>
            <person name="van den Hondel C.A.M.J.J."/>
            <person name="van der Heijden R.T.J.M."/>
            <person name="van der Kaaij R.M."/>
            <person name="Klis F.M."/>
            <person name="Kools H.J."/>
            <person name="Kubicek C.P."/>
            <person name="van Kuyk P.A."/>
            <person name="Lauber J."/>
            <person name="Lu X."/>
            <person name="van der Maarel M.J.E.C."/>
            <person name="Meulenberg R."/>
            <person name="Menke H."/>
            <person name="Mortimer M.A."/>
            <person name="Nielsen J."/>
            <person name="Oliver S.G."/>
            <person name="Olsthoorn M."/>
            <person name="Pal K."/>
            <person name="van Peij N.N.M.E."/>
            <person name="Ram A.F.J."/>
            <person name="Rinas U."/>
            <person name="Roubos J.A."/>
            <person name="Sagt C.M.J."/>
            <person name="Schmoll M."/>
            <person name="Sun J."/>
            <person name="Ussery D."/>
            <person name="Varga J."/>
            <person name="Vervecken W."/>
            <person name="van de Vondervoort P.J.J."/>
            <person name="Wedler H."/>
            <person name="Woesten H.A.B."/>
            <person name="Zeng A.-P."/>
            <person name="van Ooyen A.J.J."/>
            <person name="Visser J."/>
            <person name="Stam H."/>
        </authorList>
    </citation>
    <scope>NUCLEOTIDE SEQUENCE [LARGE SCALE GENOMIC DNA]</scope>
    <source>
        <strain>ATCC MYA-4892 / CBS 513.88 / FGSC A1513</strain>
    </source>
</reference>
<evidence type="ECO:0000250" key="1"/>
<evidence type="ECO:0000256" key="2">
    <source>
        <dbReference type="SAM" id="MobiDB-lite"/>
    </source>
</evidence>
<evidence type="ECO:0000305" key="3"/>
<name>KAPC_ASPNC</name>
<organism>
    <name type="scientific">Aspergillus niger (strain ATCC MYA-4892 / CBS 513.88 / FGSC A1513)</name>
    <dbReference type="NCBI Taxonomy" id="425011"/>
    <lineage>
        <taxon>Eukaryota</taxon>
        <taxon>Fungi</taxon>
        <taxon>Dikarya</taxon>
        <taxon>Ascomycota</taxon>
        <taxon>Pezizomycotina</taxon>
        <taxon>Eurotiomycetes</taxon>
        <taxon>Eurotiomycetidae</taxon>
        <taxon>Eurotiales</taxon>
        <taxon>Aspergillaceae</taxon>
        <taxon>Aspergillus</taxon>
        <taxon>Aspergillus subgen. Circumdati</taxon>
    </lineage>
</organism>
<accession>A2R346</accession>
<dbReference type="EMBL" id="AM270320">
    <property type="protein sequence ID" value="CAK46538.1"/>
    <property type="status" value="ALT_SEQ"/>
    <property type="molecule type" value="Genomic_DNA"/>
</dbReference>
<dbReference type="RefSeq" id="XP_001400926.2">
    <property type="nucleotide sequence ID" value="XM_001400889.2"/>
</dbReference>
<dbReference type="SMR" id="A2R346"/>
<dbReference type="EnsemblFungi" id="CAK46538">
    <property type="protein sequence ID" value="CAK46538"/>
    <property type="gene ID" value="An14g03010"/>
</dbReference>
<dbReference type="VEuPathDB" id="FungiDB:An14g03010"/>
<dbReference type="OrthoDB" id="124671at5052"/>
<dbReference type="Proteomes" id="UP000006706">
    <property type="component" value="Chromosome 1R"/>
</dbReference>
<dbReference type="GO" id="GO:0090575">
    <property type="term" value="C:RNA polymerase II transcription regulator complex"/>
    <property type="evidence" value="ECO:0007669"/>
    <property type="project" value="TreeGrafter"/>
</dbReference>
<dbReference type="GO" id="GO:0001228">
    <property type="term" value="F:DNA-binding transcription activator activity, RNA polymerase II-specific"/>
    <property type="evidence" value="ECO:0007669"/>
    <property type="project" value="TreeGrafter"/>
</dbReference>
<dbReference type="GO" id="GO:0000976">
    <property type="term" value="F:transcription cis-regulatory region binding"/>
    <property type="evidence" value="ECO:0007669"/>
    <property type="project" value="InterPro"/>
</dbReference>
<dbReference type="Gene3D" id="1.20.5.170">
    <property type="match status" value="1"/>
</dbReference>
<dbReference type="InterPro" id="IPR050936">
    <property type="entry name" value="AP-1-like"/>
</dbReference>
<dbReference type="InterPro" id="IPR004827">
    <property type="entry name" value="bZIP"/>
</dbReference>
<dbReference type="InterPro" id="IPR046347">
    <property type="entry name" value="bZIP_sf"/>
</dbReference>
<dbReference type="PANTHER" id="PTHR40621">
    <property type="entry name" value="TRANSCRIPTION FACTOR KAPC-RELATED"/>
    <property type="match status" value="1"/>
</dbReference>
<dbReference type="PANTHER" id="PTHR40621:SF11">
    <property type="entry name" value="TRANSCRIPTION FACTOR KAPC-RELATED"/>
    <property type="match status" value="1"/>
</dbReference>
<dbReference type="Pfam" id="PF00170">
    <property type="entry name" value="bZIP_1"/>
    <property type="match status" value="1"/>
</dbReference>
<dbReference type="SMART" id="SM00338">
    <property type="entry name" value="BRLZ"/>
    <property type="match status" value="1"/>
</dbReference>
<dbReference type="SUPFAM" id="SSF57959">
    <property type="entry name" value="Leucine zipper domain"/>
    <property type="match status" value="1"/>
</dbReference>
<dbReference type="PROSITE" id="PS00036">
    <property type="entry name" value="BZIP_BASIC"/>
    <property type="match status" value="1"/>
</dbReference>
<protein>
    <recommendedName>
        <fullName>Putative transcription factor kapC</fullName>
    </recommendedName>
</protein>
<gene>
    <name type="primary">kapC</name>
    <name type="ORF">An14g03010</name>
</gene>
<proteinExistence type="inferred from homology"/>
<sequence length="283" mass="30691">MQPTLAPAPHPSMQTSAQDHADQVLHDQLLAAHQHLSHPQQARPQGPTAQPPHMQPNTTSPRDQNNIDPAISGAAMLSGPPQTPPQPEPTGQESPKTYGKRPLSTSKRAAQNRAAQRAFRQRKESYIRKLEEQVKEFDNTNETMKQLQAENYQLREYIINLQSRLLDSQGEVPELPGNIDLNQPRNDISVPPPGAPAATGPAPGPGGAPQQMQVPNPGAATNEDMNSLNRIAVAGLGMRKHPNEEANFLGNNFQARRPRNDDGQPDGSEATKTEPGHGLPVVS</sequence>